<reference key="1">
    <citation type="journal article" date="1996" name="Science">
        <title>Complete genome sequence of the methanogenic archaeon, Methanococcus jannaschii.</title>
        <authorList>
            <person name="Bult C.J."/>
            <person name="White O."/>
            <person name="Olsen G.J."/>
            <person name="Zhou L."/>
            <person name="Fleischmann R.D."/>
            <person name="Sutton G.G."/>
            <person name="Blake J.A."/>
            <person name="FitzGerald L.M."/>
            <person name="Clayton R.A."/>
            <person name="Gocayne J.D."/>
            <person name="Kerlavage A.R."/>
            <person name="Dougherty B.A."/>
            <person name="Tomb J.-F."/>
            <person name="Adams M.D."/>
            <person name="Reich C.I."/>
            <person name="Overbeek R."/>
            <person name="Kirkness E.F."/>
            <person name="Weinstock K.G."/>
            <person name="Merrick J.M."/>
            <person name="Glodek A."/>
            <person name="Scott J.L."/>
            <person name="Geoghagen N.S.M."/>
            <person name="Weidman J.F."/>
            <person name="Fuhrmann J.L."/>
            <person name="Nguyen D."/>
            <person name="Utterback T.R."/>
            <person name="Kelley J.M."/>
            <person name="Peterson J.D."/>
            <person name="Sadow P.W."/>
            <person name="Hanna M.C."/>
            <person name="Cotton M.D."/>
            <person name="Roberts K.M."/>
            <person name="Hurst M.A."/>
            <person name="Kaine B.P."/>
            <person name="Borodovsky M."/>
            <person name="Klenk H.-P."/>
            <person name="Fraser C.M."/>
            <person name="Smith H.O."/>
            <person name="Woese C.R."/>
            <person name="Venter J.C."/>
        </authorList>
    </citation>
    <scope>NUCLEOTIDE SEQUENCE [LARGE SCALE GENOMIC DNA]</scope>
    <source>
        <strain>ATCC 43067 / DSM 2661 / JAL-1 / JCM 10045 / NBRC 100440</strain>
    </source>
</reference>
<feature type="chain" id="PRO_0000060064" description="Probable branched-chain amino acid transport permease protein LivH">
    <location>
        <begin position="1"/>
        <end position="315"/>
    </location>
</feature>
<feature type="transmembrane region" description="Helical" evidence="2">
    <location>
        <begin position="14"/>
        <end position="34"/>
    </location>
</feature>
<feature type="transmembrane region" description="Helical" evidence="2">
    <location>
        <begin position="49"/>
        <end position="69"/>
    </location>
</feature>
<feature type="transmembrane region" description="Helical" evidence="2">
    <location>
        <begin position="70"/>
        <end position="90"/>
    </location>
</feature>
<feature type="transmembrane region" description="Helical" evidence="2">
    <location>
        <begin position="100"/>
        <end position="120"/>
    </location>
</feature>
<feature type="transmembrane region" description="Helical" evidence="2">
    <location>
        <begin position="150"/>
        <end position="170"/>
    </location>
</feature>
<feature type="transmembrane region" description="Helical" evidence="2">
    <location>
        <begin position="201"/>
        <end position="221"/>
    </location>
</feature>
<feature type="transmembrane region" description="Helical" evidence="2">
    <location>
        <begin position="224"/>
        <end position="244"/>
    </location>
</feature>
<feature type="transmembrane region" description="Helical" evidence="2">
    <location>
        <begin position="250"/>
        <end position="270"/>
    </location>
</feature>
<feature type="transmembrane region" description="Helical" evidence="2">
    <location>
        <begin position="283"/>
        <end position="303"/>
    </location>
</feature>
<sequence>MVKLLLKDLGEKMILEGAIIYSNLLVLLALGLTLTYITTNVPNFAQGSYAIVGSYVALTLLKLFGICPYLSLPVLFVVGAIVGLITYLALKPLIKRNASVEILMIATLAIDLILLGVIGAYSEILSQIVGSTQAKFVFANLDFSLFGFKGILFVSTFVVILLLIGLYLLLYKTKFGIALRASMENPSLAQTMGIDVEKTRLFSWILSGALAGVAGGLLPFMQEIVPATGDLIIISIFAASIVGGLRHISGALIGGYIIGISESLITYYLASAFGTGFLVYGKVISLIIMIATLLIAPYGITGVDWKKLKRLLSTS</sequence>
<evidence type="ECO:0000250" key="1"/>
<evidence type="ECO:0000255" key="2"/>
<evidence type="ECO:0000305" key="3"/>
<accession>Q58665</accession>
<comment type="function">
    <text evidence="1">Part of the binding-protein-dependent transport system for branched-chain amino acids. Probably responsible for the translocation of the substrates across the membrane (By similarity).</text>
</comment>
<comment type="subcellular location">
    <subcellularLocation>
        <location evidence="3">Cell membrane</location>
        <topology evidence="3">Multi-pass membrane protein</topology>
    </subcellularLocation>
</comment>
<comment type="similarity">
    <text evidence="3">Belongs to the binding-protein-dependent transport system permease family. LivHM subfamily.</text>
</comment>
<proteinExistence type="inferred from homology"/>
<gene>
    <name type="primary">livH</name>
    <name type="ordered locus">MJ1269</name>
</gene>
<dbReference type="EMBL" id="L77117">
    <property type="protein sequence ID" value="AAB99275.1"/>
    <property type="molecule type" value="Genomic_DNA"/>
</dbReference>
<dbReference type="PIR" id="D64458">
    <property type="entry name" value="D64458"/>
</dbReference>
<dbReference type="FunCoup" id="Q58665">
    <property type="interactions" value="10"/>
</dbReference>
<dbReference type="STRING" id="243232.MJ_1269"/>
<dbReference type="PaxDb" id="243232-MJ_1269"/>
<dbReference type="EnsemblBacteria" id="AAB99275">
    <property type="protein sequence ID" value="AAB99275"/>
    <property type="gene ID" value="MJ_1269"/>
</dbReference>
<dbReference type="KEGG" id="mja:MJ_1269"/>
<dbReference type="eggNOG" id="arCOG01269">
    <property type="taxonomic scope" value="Archaea"/>
</dbReference>
<dbReference type="HOGENOM" id="CLU_039929_1_0_2"/>
<dbReference type="InParanoid" id="Q58665"/>
<dbReference type="PhylomeDB" id="Q58665"/>
<dbReference type="Proteomes" id="UP000000805">
    <property type="component" value="Chromosome"/>
</dbReference>
<dbReference type="GO" id="GO:0005886">
    <property type="term" value="C:plasma membrane"/>
    <property type="evidence" value="ECO:0000318"/>
    <property type="project" value="GO_Central"/>
</dbReference>
<dbReference type="GO" id="GO:0022857">
    <property type="term" value="F:transmembrane transporter activity"/>
    <property type="evidence" value="ECO:0000318"/>
    <property type="project" value="GO_Central"/>
</dbReference>
<dbReference type="GO" id="GO:0006865">
    <property type="term" value="P:amino acid transport"/>
    <property type="evidence" value="ECO:0007669"/>
    <property type="project" value="UniProtKB-KW"/>
</dbReference>
<dbReference type="GO" id="GO:0055085">
    <property type="term" value="P:transmembrane transport"/>
    <property type="evidence" value="ECO:0000318"/>
    <property type="project" value="GO_Central"/>
</dbReference>
<dbReference type="CDD" id="cd06582">
    <property type="entry name" value="TM_PBP1_LivH_like"/>
    <property type="match status" value="1"/>
</dbReference>
<dbReference type="InterPro" id="IPR001851">
    <property type="entry name" value="ABC_transp_permease"/>
</dbReference>
<dbReference type="InterPro" id="IPR052157">
    <property type="entry name" value="BCAA_transport_permease"/>
</dbReference>
<dbReference type="PANTHER" id="PTHR11795:SF449">
    <property type="entry name" value="BRANCHED-CHAIN AMINO ACID TRANSPORT PERMEASE PROTEIN LIVH-RELATED"/>
    <property type="match status" value="1"/>
</dbReference>
<dbReference type="PANTHER" id="PTHR11795">
    <property type="entry name" value="BRANCHED-CHAIN AMINO ACID TRANSPORT SYSTEM PERMEASE PROTEIN LIVH"/>
    <property type="match status" value="1"/>
</dbReference>
<dbReference type="Pfam" id="PF02653">
    <property type="entry name" value="BPD_transp_2"/>
    <property type="match status" value="1"/>
</dbReference>
<keyword id="KW-0029">Amino-acid transport</keyword>
<keyword id="KW-1003">Cell membrane</keyword>
<keyword id="KW-0472">Membrane</keyword>
<keyword id="KW-1185">Reference proteome</keyword>
<keyword id="KW-0812">Transmembrane</keyword>
<keyword id="KW-1133">Transmembrane helix</keyword>
<keyword id="KW-0813">Transport</keyword>
<organism>
    <name type="scientific">Methanocaldococcus jannaschii (strain ATCC 43067 / DSM 2661 / JAL-1 / JCM 10045 / NBRC 100440)</name>
    <name type="common">Methanococcus jannaschii</name>
    <dbReference type="NCBI Taxonomy" id="243232"/>
    <lineage>
        <taxon>Archaea</taxon>
        <taxon>Methanobacteriati</taxon>
        <taxon>Methanobacteriota</taxon>
        <taxon>Methanomada group</taxon>
        <taxon>Methanococci</taxon>
        <taxon>Methanococcales</taxon>
        <taxon>Methanocaldococcaceae</taxon>
        <taxon>Methanocaldococcus</taxon>
    </lineage>
</organism>
<protein>
    <recommendedName>
        <fullName>Probable branched-chain amino acid transport permease protein LivH</fullName>
    </recommendedName>
</protein>
<name>LIVH_METJA</name>